<feature type="chain" id="PRO_0000363950" description="Serine/threonine-protein kinase pakE">
    <location>
        <begin position="1"/>
        <end position="926"/>
    </location>
</feature>
<feature type="domain" description="Protein kinase" evidence="4">
    <location>
        <begin position="650"/>
        <end position="903"/>
    </location>
</feature>
<feature type="region of interest" description="Disordered" evidence="6">
    <location>
        <begin position="36"/>
        <end position="257"/>
    </location>
</feature>
<feature type="region of interest" description="Disordered" evidence="6">
    <location>
        <begin position="546"/>
        <end position="576"/>
    </location>
</feature>
<feature type="coiled-coil region" evidence="3">
    <location>
        <begin position="534"/>
        <end position="567"/>
    </location>
</feature>
<feature type="compositionally biased region" description="Polar residues" evidence="6">
    <location>
        <begin position="36"/>
        <end position="55"/>
    </location>
</feature>
<feature type="compositionally biased region" description="Low complexity" evidence="6">
    <location>
        <begin position="56"/>
        <end position="107"/>
    </location>
</feature>
<feature type="compositionally biased region" description="Polar residues" evidence="6">
    <location>
        <begin position="108"/>
        <end position="117"/>
    </location>
</feature>
<feature type="compositionally biased region" description="Low complexity" evidence="6">
    <location>
        <begin position="134"/>
        <end position="173"/>
    </location>
</feature>
<feature type="compositionally biased region" description="Polar residues" evidence="6">
    <location>
        <begin position="183"/>
        <end position="204"/>
    </location>
</feature>
<feature type="compositionally biased region" description="Low complexity" evidence="6">
    <location>
        <begin position="215"/>
        <end position="253"/>
    </location>
</feature>
<feature type="active site" description="Proton acceptor" evidence="1 4 5">
    <location>
        <position position="771"/>
    </location>
</feature>
<feature type="binding site" evidence="1 4">
    <location>
        <begin position="656"/>
        <end position="664"/>
    </location>
    <ligand>
        <name>ATP</name>
        <dbReference type="ChEBI" id="CHEBI:30616"/>
    </ligand>
</feature>
<feature type="binding site" evidence="1 4">
    <location>
        <position position="679"/>
    </location>
    <ligand>
        <name>ATP</name>
        <dbReference type="ChEBI" id="CHEBI:30616"/>
    </ligand>
</feature>
<comment type="function">
    <text evidence="7">May play a role in responding to changes in chemoattractant levels.</text>
</comment>
<comment type="catalytic activity">
    <reaction evidence="2">
        <text>L-seryl-[protein] + ATP = O-phospho-L-seryl-[protein] + ADP + H(+)</text>
        <dbReference type="Rhea" id="RHEA:17989"/>
        <dbReference type="Rhea" id="RHEA-COMP:9863"/>
        <dbReference type="Rhea" id="RHEA-COMP:11604"/>
        <dbReference type="ChEBI" id="CHEBI:15378"/>
        <dbReference type="ChEBI" id="CHEBI:29999"/>
        <dbReference type="ChEBI" id="CHEBI:30616"/>
        <dbReference type="ChEBI" id="CHEBI:83421"/>
        <dbReference type="ChEBI" id="CHEBI:456216"/>
        <dbReference type="EC" id="2.7.11.1"/>
    </reaction>
</comment>
<comment type="catalytic activity">
    <reaction evidence="2">
        <text>L-threonyl-[protein] + ATP = O-phospho-L-threonyl-[protein] + ADP + H(+)</text>
        <dbReference type="Rhea" id="RHEA:46608"/>
        <dbReference type="Rhea" id="RHEA-COMP:11060"/>
        <dbReference type="Rhea" id="RHEA-COMP:11605"/>
        <dbReference type="ChEBI" id="CHEBI:15378"/>
        <dbReference type="ChEBI" id="CHEBI:30013"/>
        <dbReference type="ChEBI" id="CHEBI:30616"/>
        <dbReference type="ChEBI" id="CHEBI:61977"/>
        <dbReference type="ChEBI" id="CHEBI:456216"/>
        <dbReference type="EC" id="2.7.11.1"/>
    </reaction>
</comment>
<comment type="cofactor">
    <cofactor evidence="2">
        <name>Mg(2+)</name>
        <dbReference type="ChEBI" id="CHEBI:18420"/>
    </cofactor>
</comment>
<comment type="disruption phenotype">
    <text evidence="7">Mutants have an aberrant response to waves of cAMP stimulation.</text>
</comment>
<comment type="similarity">
    <text evidence="2">Belongs to the protein kinase superfamily. STE Ser/Thr protein kinase family. STE20 subfamily.</text>
</comment>
<organism>
    <name type="scientific">Dictyostelium discoideum</name>
    <name type="common">Social amoeba</name>
    <dbReference type="NCBI Taxonomy" id="44689"/>
    <lineage>
        <taxon>Eukaryota</taxon>
        <taxon>Amoebozoa</taxon>
        <taxon>Evosea</taxon>
        <taxon>Eumycetozoa</taxon>
        <taxon>Dictyostelia</taxon>
        <taxon>Dictyosteliales</taxon>
        <taxon>Dictyosteliaceae</taxon>
        <taxon>Dictyostelium</taxon>
    </lineage>
</organism>
<sequence length="926" mass="104244">MEEDKDSDTLQILNDIINNEPNLEIYVKSKNNNYISSRELPTQDSSTKTSNITTPNNNNNNNNNNNNNNNNNNNNNNNNNNNNNNNNNNNNNNNNNNNNNNNNNNNNTPTSLNSSWKSVVPKRKIDTSSGAILNNNNNVGSPNNQSTSQTNHQQPPPQQLQQQQSLSSTSTPSISPPMLSPSRRNVTSPNLTRSDPTVPITNSRPTSPLTPPLSPQFQLNNLNFDDNNDHSTTTTNNNNNNNNNNSNNNNNNNRPKLMRENSINKRSSLQTLPVSSSSSSSAEDEILIKVWLPMEYTGQLYKVRKFSGGSSTLKVSSMLNSQLSPMYQSPKNKLFLNNEEKPIPSHLTLKDLSLSKYDILYLRREPEYELIIPSSPQCGSLVMDKDIKIDDMLIKIEHWLKDILDHAPHSTSQQQQQQLQQQPILHVDKHEYFTSLEDQQLMSGHITNSSQYTLLKKLSVPTSNSRQTGKMSRGYYLRLYDQKPISNYGIKIKDTLIFKKKILNRGLSIDDAEGGIEITVLYSPLSMLPTTSDLDFEKELKENQQQLNNNNNNNNNNNNNNNNNNNNNNNNITTTTTTTTSSLINQTNEILLPNLIKIDNTSLLQDIKNEKKKRKSKRTPSSVGLPFNIIHKTHVDFEYKWSGTSVEDTFEFKEKLGQGGYGAVFKVLHRETNFPLAIKVLSITPTRIKDIEKEIDLLKKCRCPNVLSYYGSISSKLTELWILMDHCAVGSINDMMKICCDTLDEEQIAVVTLNVLNGLGYLHSKGIVHLDVKAANILLTEDKQIKIADFGVSQQLQTEYGQANVYIGSPLYMAPEVILKAPYNSKADIWSLGITLIELAEGRPPNRGLRSMNQLVEIPNMPPPKLSNPKDWSPCFNNFLATCLVKDPVQRPSVIDLLSHDFIKNAKTTEVLSNLVKQTLSSRQSI</sequence>
<proteinExistence type="inferred from homology"/>
<keyword id="KW-0067">ATP-binding</keyword>
<keyword id="KW-0175">Coiled coil</keyword>
<keyword id="KW-0418">Kinase</keyword>
<keyword id="KW-0460">Magnesium</keyword>
<keyword id="KW-0479">Metal-binding</keyword>
<keyword id="KW-0547">Nucleotide-binding</keyword>
<keyword id="KW-1185">Reference proteome</keyword>
<keyword id="KW-0723">Serine/threonine-protein kinase</keyword>
<keyword id="KW-0808">Transferase</keyword>
<name>PAKE_DICDI</name>
<accession>Q54B33</accession>
<reference evidence="9" key="1">
    <citation type="journal article" date="2005" name="Nature">
        <title>The genome of the social amoeba Dictyostelium discoideum.</title>
        <authorList>
            <person name="Eichinger L."/>
            <person name="Pachebat J.A."/>
            <person name="Gloeckner G."/>
            <person name="Rajandream M.A."/>
            <person name="Sucgang R."/>
            <person name="Berriman M."/>
            <person name="Song J."/>
            <person name="Olsen R."/>
            <person name="Szafranski K."/>
            <person name="Xu Q."/>
            <person name="Tunggal B."/>
            <person name="Kummerfeld S."/>
            <person name="Madera M."/>
            <person name="Konfortov B.A."/>
            <person name="Rivero F."/>
            <person name="Bankier A.T."/>
            <person name="Lehmann R."/>
            <person name="Hamlin N."/>
            <person name="Davies R."/>
            <person name="Gaudet P."/>
            <person name="Fey P."/>
            <person name="Pilcher K."/>
            <person name="Chen G."/>
            <person name="Saunders D."/>
            <person name="Sodergren E.J."/>
            <person name="Davis P."/>
            <person name="Kerhornou A."/>
            <person name="Nie X."/>
            <person name="Hall N."/>
            <person name="Anjard C."/>
            <person name="Hemphill L."/>
            <person name="Bason N."/>
            <person name="Farbrother P."/>
            <person name="Desany B."/>
            <person name="Just E."/>
            <person name="Morio T."/>
            <person name="Rost R."/>
            <person name="Churcher C.M."/>
            <person name="Cooper J."/>
            <person name="Haydock S."/>
            <person name="van Driessche N."/>
            <person name="Cronin A."/>
            <person name="Goodhead I."/>
            <person name="Muzny D.M."/>
            <person name="Mourier T."/>
            <person name="Pain A."/>
            <person name="Lu M."/>
            <person name="Harper D."/>
            <person name="Lindsay R."/>
            <person name="Hauser H."/>
            <person name="James K.D."/>
            <person name="Quiles M."/>
            <person name="Madan Babu M."/>
            <person name="Saito T."/>
            <person name="Buchrieser C."/>
            <person name="Wardroper A."/>
            <person name="Felder M."/>
            <person name="Thangavelu M."/>
            <person name="Johnson D."/>
            <person name="Knights A."/>
            <person name="Loulseged H."/>
            <person name="Mungall K.L."/>
            <person name="Oliver K."/>
            <person name="Price C."/>
            <person name="Quail M.A."/>
            <person name="Urushihara H."/>
            <person name="Hernandez J."/>
            <person name="Rabbinowitsch E."/>
            <person name="Steffen D."/>
            <person name="Sanders M."/>
            <person name="Ma J."/>
            <person name="Kohara Y."/>
            <person name="Sharp S."/>
            <person name="Simmonds M.N."/>
            <person name="Spiegler S."/>
            <person name="Tivey A."/>
            <person name="Sugano S."/>
            <person name="White B."/>
            <person name="Walker D."/>
            <person name="Woodward J.R."/>
            <person name="Winckler T."/>
            <person name="Tanaka Y."/>
            <person name="Shaulsky G."/>
            <person name="Schleicher M."/>
            <person name="Weinstock G.M."/>
            <person name="Rosenthal A."/>
            <person name="Cox E.C."/>
            <person name="Chisholm R.L."/>
            <person name="Gibbs R.A."/>
            <person name="Loomis W.F."/>
            <person name="Platzer M."/>
            <person name="Kay R.R."/>
            <person name="Williams J.G."/>
            <person name="Dear P.H."/>
            <person name="Noegel A.A."/>
            <person name="Barrell B.G."/>
            <person name="Kuspa A."/>
        </authorList>
    </citation>
    <scope>NUCLEOTIDE SEQUENCE [LARGE SCALE GENOMIC DNA]</scope>
    <source>
        <strain evidence="9">AX4</strain>
    </source>
</reference>
<reference evidence="8" key="2">
    <citation type="journal article" date="2007" name="Genome Biol.">
        <title>High-throughput analysis of spatio-temporal dynamics in Dictyostelium.</title>
        <authorList>
            <person name="Sawai S."/>
            <person name="Guan X.-J."/>
            <person name="Kuspa A."/>
            <person name="Cox E.C."/>
        </authorList>
    </citation>
    <scope>FUNCTION</scope>
    <scope>DISRUPTION PHENOTYPE</scope>
</reference>
<evidence type="ECO:0000250" key="1">
    <source>
        <dbReference type="UniProtKB" id="P28523"/>
    </source>
</evidence>
<evidence type="ECO:0000250" key="2">
    <source>
        <dbReference type="UniProtKB" id="Q869N2"/>
    </source>
</evidence>
<evidence type="ECO:0000255" key="3"/>
<evidence type="ECO:0000255" key="4">
    <source>
        <dbReference type="PROSITE-ProRule" id="PRU00159"/>
    </source>
</evidence>
<evidence type="ECO:0000255" key="5">
    <source>
        <dbReference type="PROSITE-ProRule" id="PRU10027"/>
    </source>
</evidence>
<evidence type="ECO:0000256" key="6">
    <source>
        <dbReference type="SAM" id="MobiDB-lite"/>
    </source>
</evidence>
<evidence type="ECO:0000269" key="7">
    <source>
    </source>
</evidence>
<evidence type="ECO:0000305" key="8"/>
<evidence type="ECO:0000312" key="9">
    <source>
        <dbReference type="EMBL" id="EAL60465.1"/>
    </source>
</evidence>
<protein>
    <recommendedName>
        <fullName evidence="2">Serine/threonine-protein kinase pakE</fullName>
        <ecNumber>2.7.11.1</ecNumber>
    </recommendedName>
</protein>
<gene>
    <name evidence="9" type="primary">pakE</name>
    <name type="ORF">DDB_G0293932</name>
</gene>
<dbReference type="EC" id="2.7.11.1"/>
<dbReference type="EMBL" id="AAFI02000224">
    <property type="protein sequence ID" value="EAL60465.1"/>
    <property type="molecule type" value="Genomic_DNA"/>
</dbReference>
<dbReference type="RefSeq" id="XP_628883.1">
    <property type="nucleotide sequence ID" value="XM_628881.1"/>
</dbReference>
<dbReference type="SMR" id="Q54B33"/>
<dbReference type="FunCoup" id="Q54B33">
    <property type="interactions" value="43"/>
</dbReference>
<dbReference type="GlyGen" id="Q54B33">
    <property type="glycosylation" value="1 site"/>
</dbReference>
<dbReference type="PaxDb" id="44689-DDB0229414"/>
<dbReference type="EnsemblProtists" id="EAL60465">
    <property type="protein sequence ID" value="EAL60465"/>
    <property type="gene ID" value="DDB_G0293932"/>
</dbReference>
<dbReference type="GeneID" id="8629499"/>
<dbReference type="KEGG" id="ddi:DDB_G0293932"/>
<dbReference type="dictyBase" id="DDB_G0293932">
    <property type="gene designation" value="pakE"/>
</dbReference>
<dbReference type="VEuPathDB" id="AmoebaDB:DDB_G0293932"/>
<dbReference type="eggNOG" id="KOG0574">
    <property type="taxonomic scope" value="Eukaryota"/>
</dbReference>
<dbReference type="HOGENOM" id="CLU_315567_0_0_1"/>
<dbReference type="InParanoid" id="Q54B33"/>
<dbReference type="OMA" id="KCRCPNV"/>
<dbReference type="PRO" id="PR:Q54B33"/>
<dbReference type="Proteomes" id="UP000002195">
    <property type="component" value="Chromosome 6"/>
</dbReference>
<dbReference type="GO" id="GO:0005737">
    <property type="term" value="C:cytoplasm"/>
    <property type="evidence" value="ECO:0000318"/>
    <property type="project" value="GO_Central"/>
</dbReference>
<dbReference type="GO" id="GO:0005524">
    <property type="term" value="F:ATP binding"/>
    <property type="evidence" value="ECO:0000250"/>
    <property type="project" value="dictyBase"/>
</dbReference>
<dbReference type="GO" id="GO:0046872">
    <property type="term" value="F:metal ion binding"/>
    <property type="evidence" value="ECO:0007669"/>
    <property type="project" value="UniProtKB-KW"/>
</dbReference>
<dbReference type="GO" id="GO:0106310">
    <property type="term" value="F:protein serine kinase activity"/>
    <property type="evidence" value="ECO:0007669"/>
    <property type="project" value="RHEA"/>
</dbReference>
<dbReference type="GO" id="GO:0004674">
    <property type="term" value="F:protein serine/threonine kinase activity"/>
    <property type="evidence" value="ECO:0000250"/>
    <property type="project" value="dictyBase"/>
</dbReference>
<dbReference type="GO" id="GO:0043327">
    <property type="term" value="P:chemotaxis to cAMP"/>
    <property type="evidence" value="ECO:0007001"/>
    <property type="project" value="dictyBase"/>
</dbReference>
<dbReference type="GO" id="GO:0035556">
    <property type="term" value="P:intracellular signal transduction"/>
    <property type="evidence" value="ECO:0000318"/>
    <property type="project" value="GO_Central"/>
</dbReference>
<dbReference type="GO" id="GO:0006468">
    <property type="term" value="P:protein phosphorylation"/>
    <property type="evidence" value="ECO:0000250"/>
    <property type="project" value="dictyBase"/>
</dbReference>
<dbReference type="CDD" id="cd06612">
    <property type="entry name" value="STKc_MST1_2"/>
    <property type="match status" value="1"/>
</dbReference>
<dbReference type="FunFam" id="1.10.510.10:FF:001091">
    <property type="entry name" value="STE family protein kinase"/>
    <property type="match status" value="1"/>
</dbReference>
<dbReference type="Gene3D" id="1.10.510.10">
    <property type="entry name" value="Transferase(Phosphotransferase) domain 1"/>
    <property type="match status" value="1"/>
</dbReference>
<dbReference type="InterPro" id="IPR011009">
    <property type="entry name" value="Kinase-like_dom_sf"/>
</dbReference>
<dbReference type="InterPro" id="IPR000719">
    <property type="entry name" value="Prot_kinase_dom"/>
</dbReference>
<dbReference type="InterPro" id="IPR017441">
    <property type="entry name" value="Protein_kinase_ATP_BS"/>
</dbReference>
<dbReference type="InterPro" id="IPR008271">
    <property type="entry name" value="Ser/Thr_kinase_AS"/>
</dbReference>
<dbReference type="InterPro" id="IPR050629">
    <property type="entry name" value="STE20/SPS1-PAK"/>
</dbReference>
<dbReference type="PANTHER" id="PTHR48012:SF28">
    <property type="entry name" value="SERINE_THREONINE-PROTEIN KINASE PAKE-RELATED"/>
    <property type="match status" value="1"/>
</dbReference>
<dbReference type="PANTHER" id="PTHR48012">
    <property type="entry name" value="STERILE20-LIKE KINASE, ISOFORM B-RELATED"/>
    <property type="match status" value="1"/>
</dbReference>
<dbReference type="Pfam" id="PF00069">
    <property type="entry name" value="Pkinase"/>
    <property type="match status" value="1"/>
</dbReference>
<dbReference type="SMART" id="SM00220">
    <property type="entry name" value="S_TKc"/>
    <property type="match status" value="1"/>
</dbReference>
<dbReference type="SUPFAM" id="SSF56112">
    <property type="entry name" value="Protein kinase-like (PK-like)"/>
    <property type="match status" value="1"/>
</dbReference>
<dbReference type="PROSITE" id="PS00107">
    <property type="entry name" value="PROTEIN_KINASE_ATP"/>
    <property type="match status" value="1"/>
</dbReference>
<dbReference type="PROSITE" id="PS50011">
    <property type="entry name" value="PROTEIN_KINASE_DOM"/>
    <property type="match status" value="1"/>
</dbReference>
<dbReference type="PROSITE" id="PS00108">
    <property type="entry name" value="PROTEIN_KINASE_ST"/>
    <property type="match status" value="1"/>
</dbReference>